<evidence type="ECO:0000256" key="1">
    <source>
        <dbReference type="SAM" id="MobiDB-lite"/>
    </source>
</evidence>
<reference key="1">
    <citation type="journal article" date="1999" name="J. Virol.">
        <title>Human herpesvirus 6B genome sequence: coding content and comparison with human herpesvirus 6A.</title>
        <authorList>
            <person name="Dominguez G."/>
            <person name="Dambaugh T.R."/>
            <person name="Stamey F.R."/>
            <person name="Dewhurst S."/>
            <person name="Inoue N."/>
            <person name="Pellett P.E."/>
        </authorList>
    </citation>
    <scope>NUCLEOTIDE SEQUENCE [LARGE SCALE GENOMIC DNA]</scope>
</reference>
<sequence>MESAKDTTSTSMFILGKPSGNNMESNEERMQNYHPDPVVEESIKEILEESLKCDVSFESLLFPELEAFDLFIPESSNDIASKNVSYSSNVEEGASDEFKTLVAQSVGNCIQSIGASVKAAMKQEQSNMEDNLINSAGLLTLHRSMLERLVLEQLGQLININLLSSASSQFVSCYAKMLSGKNLDFFNWCEPRFIVFACDKFDGLVKKIASESRDLLMDLKANMNNQFITALKNIFSKAYVALDSGKLNMVATSLLLMAHNKEMSNPEISNKEFCKQVNLLKQELLESRNEIIENHVKNMKMFQEFANKQMNQIFMDNCDKTFLKIHINCKNLITAAKNIGIAVLQSIVLCSNEFSWQYLKPRRHQFKITMMNMITHACECIETIYDDTGLIKPLTSSDIMEGYIAINKNRESSICDLNIDPSESILLELADFDEHGKYSEESSIESIHEDDDNVDYLKYMEVQSPTDNNIPTPSKNNESPTRQKLTNIHEKDVGKMYPDTPSPDVPGKSKEAKTFIEYSRQIGKEQTSPNCVCTASVTDLGGPDNFKSITGLESGKHFLIKKLLETQPDSVVVETGSGQQDILAYSPDKRSQTKEWIQEKGSNSKCTETLPGMTFTNSATPVKSHGAIQDTLNPESKLDKEMEAVESLVNLCDGFHDNPLISEMITFGYETDHSAPYESESDNNDETDYIADCDSTVRTNNIHMNNTNENTPFSKSLYSPPEVTPSKEDHKTEKIVAVSQKCKSKKRTAKRKNVPIKPSKSKKIKLDRLPETTNVIVISSESEDEEDGNNIIDKSMLEKTIKSEPNSESSSESDDCTSEDNYLHLSDYDKVINNGHCQSKGFPSPVFTIPIRSMPGTHDIRNKFVPKKHWLWFMRKTHKVDNCVIHSSAKMNVKNDSDVTEANHCFINHFVPIKTDDEEYEKENVSYTYSKIQDSKTDLEDITPTKKLITEMVMENFMDLTDIIKHGIAKHCQDLSSKYTVITHTACEKNLNVANSQNLVTAETQIFDPQGTGNNSPILNIINDTTCQNDENRCTEGTSNDNEKCTIRSDCNSDKMEVFKLDGYPSDYDPFEENAQIY</sequence>
<proteinExistence type="evidence at protein level"/>
<protein>
    <recommendedName>
        <fullName>Protein U90</fullName>
    </recommendedName>
</protein>
<organismHost>
    <name type="scientific">Homo sapiens</name>
    <name type="common">Human</name>
    <dbReference type="NCBI Taxonomy" id="9606"/>
</organismHost>
<dbReference type="EMBL" id="AF157706">
    <property type="protein sequence ID" value="AAD49675.1"/>
    <property type="molecule type" value="Genomic_DNA"/>
</dbReference>
<dbReference type="RefSeq" id="NP_050266.1">
    <property type="nucleotide sequence ID" value="NC_000898.1"/>
</dbReference>
<dbReference type="BioGRID" id="1678313">
    <property type="interactions" value="1"/>
</dbReference>
<dbReference type="DIP" id="DIP-60437N"/>
<dbReference type="IntAct" id="Q77PU6">
    <property type="interactions" value="1"/>
</dbReference>
<dbReference type="GeneID" id="1497087"/>
<dbReference type="KEGG" id="vg:1497087"/>
<dbReference type="Proteomes" id="UP000006930">
    <property type="component" value="Segment"/>
</dbReference>
<dbReference type="InterPro" id="IPR005507">
    <property type="entry name" value="HHV6-IE"/>
</dbReference>
<dbReference type="Pfam" id="PF03753">
    <property type="entry name" value="HHV6-IE"/>
    <property type="match status" value="1"/>
</dbReference>
<feature type="chain" id="PRO_0000408430" description="Protein U90">
    <location>
        <begin position="1"/>
        <end position="1078"/>
    </location>
</feature>
<feature type="region of interest" description="Disordered" evidence="1">
    <location>
        <begin position="1"/>
        <end position="28"/>
    </location>
</feature>
<feature type="region of interest" description="Disordered" evidence="1">
    <location>
        <begin position="464"/>
        <end position="483"/>
    </location>
</feature>
<feature type="region of interest" description="Disordered" evidence="1">
    <location>
        <begin position="703"/>
        <end position="732"/>
    </location>
</feature>
<feature type="region of interest" description="Disordered" evidence="1">
    <location>
        <begin position="781"/>
        <end position="818"/>
    </location>
</feature>
<feature type="compositionally biased region" description="Polar residues" evidence="1">
    <location>
        <begin position="1"/>
        <end position="12"/>
    </location>
</feature>
<accession>Q77PU6</accession>
<comment type="interaction">
    <interactant intactId="EBI-15849356">
        <id>Q77PU6</id>
    </interactant>
    <interactant intactId="EBI-1546963">
        <id>P52630</id>
        <label>STAT2</label>
    </interactant>
    <organismsDiffer>true</organismsDiffer>
    <experiments>2</experiments>
</comment>
<organism>
    <name type="scientific">Human herpesvirus 6B (strain Z29)</name>
    <name type="common">HHV-6 variant B</name>
    <name type="synonym">Human B lymphotropic virus</name>
    <dbReference type="NCBI Taxonomy" id="36351"/>
    <lineage>
        <taxon>Viruses</taxon>
        <taxon>Duplodnaviria</taxon>
        <taxon>Heunggongvirae</taxon>
        <taxon>Peploviricota</taxon>
        <taxon>Herviviricetes</taxon>
        <taxon>Herpesvirales</taxon>
        <taxon>Orthoherpesviridae</taxon>
        <taxon>Betaherpesvirinae</taxon>
        <taxon>Roseolovirus</taxon>
        <taxon>Roseolovirus humanbeta6b</taxon>
        <taxon>Human herpesvirus 6B</taxon>
    </lineage>
</organism>
<keyword id="KW-1185">Reference proteome</keyword>
<name>U90_HHV6Z</name>
<gene>
    <name type="primary">U90</name>
</gene>